<dbReference type="EMBL" id="Y08322">
    <property type="protein sequence ID" value="CAA69624.1"/>
    <property type="molecule type" value="mRNA"/>
</dbReference>
<dbReference type="PIR" id="T09787">
    <property type="entry name" value="T09787"/>
</dbReference>
<dbReference type="RefSeq" id="NP_001413442.1">
    <property type="nucleotide sequence ID" value="NM_001426513.1"/>
</dbReference>
<dbReference type="GeneID" id="110812313"/>
<dbReference type="OrthoDB" id="739871at2759"/>
<dbReference type="GO" id="GO:0005507">
    <property type="term" value="F:copper ion binding"/>
    <property type="evidence" value="ECO:0007669"/>
    <property type="project" value="InterPro"/>
</dbReference>
<dbReference type="GO" id="GO:0008270">
    <property type="term" value="F:zinc ion binding"/>
    <property type="evidence" value="ECO:0007669"/>
    <property type="project" value="InterPro"/>
</dbReference>
<dbReference type="GO" id="GO:1990748">
    <property type="term" value="P:cellular detoxification"/>
    <property type="evidence" value="ECO:0000250"/>
    <property type="project" value="UniProtKB"/>
</dbReference>
<dbReference type="GO" id="GO:0006878">
    <property type="term" value="P:intracellular copper ion homeostasis"/>
    <property type="evidence" value="ECO:0007669"/>
    <property type="project" value="InterPro"/>
</dbReference>
<dbReference type="InterPro" id="IPR044671">
    <property type="entry name" value="MT3"/>
</dbReference>
<dbReference type="PANTHER" id="PTHR33357">
    <property type="entry name" value="METALLOTHIONEIN-LIKE PROTEIN 3"/>
    <property type="match status" value="1"/>
</dbReference>
<dbReference type="PANTHER" id="PTHR33357:SF3">
    <property type="entry name" value="METALLOTHIONEIN-LIKE PROTEIN 3"/>
    <property type="match status" value="1"/>
</dbReference>
<accession>Q96386</accession>
<sequence>MSDTCGNCDCADKTQCVKKGSSYTADIIETEKSIMTVVMDAPAAENDGKCKCGPSCSCTNCTCGH</sequence>
<comment type="function">
    <text>Metallothioneins have a high content of cysteine residues that bind various heavy metals.</text>
</comment>
<comment type="similarity">
    <text evidence="1">Belongs to the metallothionein superfamily. Type 15 family.</text>
</comment>
<keyword id="KW-0479">Metal-binding</keyword>
<keyword id="KW-0480">Metal-thiolate cluster</keyword>
<reference key="1">
    <citation type="online journal article" date="1996" name="Plant Gene Register">
        <title>Nucleotide sequence of cDNA clone encoding a metallothionein-like protein from Papaya fruit.</title>
        <authorList>
            <person name="Lam P.F."/>
            <person name="Abu Bakar U.K."/>
        </authorList>
        <locator>PGR96-120</locator>
    </citation>
    <scope>NUCLEOTIDE SEQUENCE [MRNA]</scope>
    <source>
        <tissue>Fruit</tissue>
    </source>
</reference>
<protein>
    <recommendedName>
        <fullName>Metallothionein-like protein type 3</fullName>
        <shortName>MT-3</shortName>
    </recommendedName>
</protein>
<evidence type="ECO:0000305" key="1"/>
<name>MT3_CARPA</name>
<proteinExistence type="inferred from homology"/>
<organism>
    <name type="scientific">Carica papaya</name>
    <name type="common">Papaya</name>
    <dbReference type="NCBI Taxonomy" id="3649"/>
    <lineage>
        <taxon>Eukaryota</taxon>
        <taxon>Viridiplantae</taxon>
        <taxon>Streptophyta</taxon>
        <taxon>Embryophyta</taxon>
        <taxon>Tracheophyta</taxon>
        <taxon>Spermatophyta</taxon>
        <taxon>Magnoliopsida</taxon>
        <taxon>eudicotyledons</taxon>
        <taxon>Gunneridae</taxon>
        <taxon>Pentapetalae</taxon>
        <taxon>rosids</taxon>
        <taxon>malvids</taxon>
        <taxon>Brassicales</taxon>
        <taxon>Caricaceae</taxon>
        <taxon>Carica</taxon>
    </lineage>
</organism>
<feature type="chain" id="PRO_0000197414" description="Metallothionein-like protein type 3">
    <location>
        <begin position="1"/>
        <end position="65"/>
    </location>
</feature>